<evidence type="ECO:0000250" key="1">
    <source>
        <dbReference type="UniProtKB" id="P61425"/>
    </source>
</evidence>
<evidence type="ECO:0000250" key="2">
    <source>
        <dbReference type="UniProtKB" id="Q9A6Q5"/>
    </source>
</evidence>
<evidence type="ECO:0000269" key="3">
    <source>
    </source>
</evidence>
<evidence type="ECO:0000303" key="4">
    <source>
    </source>
</evidence>
<evidence type="ECO:0000305" key="5"/>
<evidence type="ECO:0000305" key="6">
    <source>
    </source>
</evidence>
<evidence type="ECO:0000312" key="7">
    <source>
        <dbReference type="EMBL" id="AKV89411.1"/>
    </source>
</evidence>
<evidence type="ECO:0000312" key="8">
    <source>
        <dbReference type="EMBL" id="SDP52021.1"/>
    </source>
</evidence>
<protein>
    <recommendedName>
        <fullName evidence="6">5-hydroxybenzimidazole synthase BzaB</fullName>
        <shortName evidence="6">5-OHBza synthase</shortName>
        <shortName>HBI synthase</shortName>
        <ecNumber evidence="1 6">4.1.99.23</ecNumber>
    </recommendedName>
</protein>
<reference key="1">
    <citation type="journal article" date="2015" name="Proc. Natl. Acad. Sci. U.S.A.">
        <title>Anaerobic biosynthesis of the lower ligand of vitamin B12.</title>
        <authorList>
            <person name="Hazra A.B."/>
            <person name="Han A.W."/>
            <person name="Mehta A.P."/>
            <person name="Mok K.C."/>
            <person name="Osadchiy V."/>
            <person name="Begley T.P."/>
            <person name="Taga M.E."/>
        </authorList>
    </citation>
    <scope>NUCLEOTIDE SEQUENCE [GENOMIC DNA]</scope>
    <scope>FUNCTION</scope>
    <scope>CATALYTIC ACTIVITY</scope>
    <scope>PATHWAY</scope>
    <source>
        <strain>ATCC 10825 / DSM 20517 / JCM 9976 / NCIMB 9554 / NCTC 10469 / 32_A2</strain>
    </source>
</reference>
<reference key="2">
    <citation type="submission" date="2016-10" db="EMBL/GenBank/DDBJ databases">
        <authorList>
            <person name="Varghese N."/>
        </authorList>
    </citation>
    <scope>NUCLEOTIDE SEQUENCE [LARGE SCALE GENOMIC DNA]</scope>
    <source>
        <strain>ATCC 10825 / DSM 20517 / JCM 9976 / NCIMB 9554 / NCTC 10469 / 32_A2</strain>
    </source>
</reference>
<proteinExistence type="evidence at protein level"/>
<organism>
    <name type="scientific">Eubacterium limosum</name>
    <dbReference type="NCBI Taxonomy" id="1736"/>
    <lineage>
        <taxon>Bacteria</taxon>
        <taxon>Bacillati</taxon>
        <taxon>Bacillota</taxon>
        <taxon>Clostridia</taxon>
        <taxon>Eubacteriales</taxon>
        <taxon>Eubacteriaceae</taxon>
        <taxon>Eubacterium</taxon>
    </lineage>
</organism>
<dbReference type="EC" id="4.1.99.23" evidence="1 6"/>
<dbReference type="EMBL" id="KT347435">
    <property type="protein sequence ID" value="AKV89411.1"/>
    <property type="molecule type" value="Genomic_DNA"/>
</dbReference>
<dbReference type="EMBL" id="FNJF01000014">
    <property type="protein sequence ID" value="SDP52021.1"/>
    <property type="molecule type" value="Genomic_DNA"/>
</dbReference>
<dbReference type="SMR" id="A0A0K1TQ05"/>
<dbReference type="STRING" id="1736.ACH52_0363"/>
<dbReference type="OrthoDB" id="9805897at2"/>
<dbReference type="UniPathway" id="UPA00148"/>
<dbReference type="GO" id="GO:0051539">
    <property type="term" value="F:4 iron, 4 sulfur cluster binding"/>
    <property type="evidence" value="ECO:0007669"/>
    <property type="project" value="UniProtKB-KW"/>
</dbReference>
<dbReference type="GO" id="GO:0016829">
    <property type="term" value="F:lyase activity"/>
    <property type="evidence" value="ECO:0007669"/>
    <property type="project" value="UniProtKB-KW"/>
</dbReference>
<dbReference type="GO" id="GO:0046872">
    <property type="term" value="F:metal ion binding"/>
    <property type="evidence" value="ECO:0007669"/>
    <property type="project" value="UniProtKB-KW"/>
</dbReference>
<dbReference type="GO" id="GO:0009236">
    <property type="term" value="P:cobalamin biosynthetic process"/>
    <property type="evidence" value="ECO:0007669"/>
    <property type="project" value="UniProtKB-UniPathway"/>
</dbReference>
<dbReference type="GO" id="GO:0009228">
    <property type="term" value="P:thiamine biosynthetic process"/>
    <property type="evidence" value="ECO:0007669"/>
    <property type="project" value="InterPro"/>
</dbReference>
<dbReference type="Gene3D" id="3.20.20.540">
    <property type="entry name" value="Radical SAM ThiC family, central domain"/>
    <property type="match status" value="1"/>
</dbReference>
<dbReference type="InterPro" id="IPR038521">
    <property type="entry name" value="ThiC/Bza_core_dom"/>
</dbReference>
<dbReference type="InterPro" id="IPR002817">
    <property type="entry name" value="ThiC/BzaA/B"/>
</dbReference>
<dbReference type="NCBIfam" id="NF009895">
    <property type="entry name" value="PRK13352.1"/>
    <property type="match status" value="1"/>
</dbReference>
<dbReference type="NCBIfam" id="TIGR00190">
    <property type="entry name" value="thiC"/>
    <property type="match status" value="1"/>
</dbReference>
<dbReference type="NCBIfam" id="TIGR04386">
    <property type="entry name" value="ThiC_like_1"/>
    <property type="match status" value="1"/>
</dbReference>
<dbReference type="PANTHER" id="PTHR30557:SF1">
    <property type="entry name" value="PHOSPHOMETHYLPYRIMIDINE SYNTHASE, CHLOROPLASTIC"/>
    <property type="match status" value="1"/>
</dbReference>
<dbReference type="PANTHER" id="PTHR30557">
    <property type="entry name" value="THIAMINE BIOSYNTHESIS PROTEIN THIC"/>
    <property type="match status" value="1"/>
</dbReference>
<dbReference type="Pfam" id="PF01964">
    <property type="entry name" value="ThiC_Rad_SAM"/>
    <property type="match status" value="1"/>
</dbReference>
<dbReference type="SFLD" id="SFLDF00407">
    <property type="entry name" value="phosphomethylpyrimidine_syntha"/>
    <property type="match status" value="1"/>
</dbReference>
<dbReference type="SFLD" id="SFLDS00113">
    <property type="entry name" value="Radical_SAM_Phosphomethylpyrim"/>
    <property type="match status" value="1"/>
</dbReference>
<gene>
    <name evidence="4 7" type="primary">bzaB</name>
    <name evidence="8" type="ORF">SAMN04515624_11453</name>
</gene>
<comment type="function">
    <text evidence="3">Together with BzaA, catalyzes the conversion of aminoimidazole ribotide (AIR) to 5-hydroxybenzimidazole (5-HBI) in a radical S-adenosyl-L-methionine (SAM)-dependent reaction. Is thus involved in the anaerobic biosynthesis of dimethylbenzimidazole (DMB), the lower axial ligand of vitamin B12 (cobalamin). Requires BzaA for catalytic activity, as BzaB alone displays no activity.</text>
</comment>
<comment type="catalytic activity">
    <reaction evidence="1 6">
        <text>5-amino-1-(5-phospho-beta-D-ribosyl)imidazole + AH2 + S-adenosyl-L-methionine = 5-hydroxybenzimidazole + 5'-deoxyadenosine + formate + L-methionine + A + NH4(+) + phosphate + 2 H(+)</text>
        <dbReference type="Rhea" id="RHEA:53504"/>
        <dbReference type="ChEBI" id="CHEBI:13193"/>
        <dbReference type="ChEBI" id="CHEBI:15378"/>
        <dbReference type="ChEBI" id="CHEBI:15740"/>
        <dbReference type="ChEBI" id="CHEBI:17319"/>
        <dbReference type="ChEBI" id="CHEBI:17499"/>
        <dbReference type="ChEBI" id="CHEBI:28938"/>
        <dbReference type="ChEBI" id="CHEBI:43474"/>
        <dbReference type="ChEBI" id="CHEBI:57844"/>
        <dbReference type="ChEBI" id="CHEBI:59789"/>
        <dbReference type="ChEBI" id="CHEBI:137404"/>
        <dbReference type="ChEBI" id="CHEBI:137981"/>
        <dbReference type="EC" id="4.1.99.23"/>
    </reaction>
</comment>
<comment type="cofactor">
    <cofactor evidence="1">
        <name>[4Fe-4S] cluster</name>
        <dbReference type="ChEBI" id="CHEBI:49883"/>
    </cofactor>
    <text evidence="2">Binds 1 [4Fe-4S] cluster per subunit. The cluster is coordinated with 3 cysteines and an exchangeable S-adenosyl-L-methionine.</text>
</comment>
<comment type="pathway">
    <text evidence="6">Cofactor biosynthesis; adenosylcobalamin biosynthesis.</text>
</comment>
<comment type="similarity">
    <text evidence="5">Belongs to the ThiC family. 5-hydroxybenzimidazole synthase subfamily.</text>
</comment>
<keyword id="KW-0004">4Fe-4S</keyword>
<keyword id="KW-0169">Cobalamin biosynthesis</keyword>
<keyword id="KW-0408">Iron</keyword>
<keyword id="KW-0411">Iron-sulfur</keyword>
<keyword id="KW-0456">Lyase</keyword>
<keyword id="KW-0479">Metal-binding</keyword>
<keyword id="KW-0949">S-adenosyl-L-methionine</keyword>
<keyword id="KW-0862">Zinc</keyword>
<sequence>MTQMLEARKGHITEEMEKVALIEGVTPEFVREGVAKGHIVIPKNKFRSRDKICGIGGGLDVKVNGLMGTSSDRNDMEMEAKKLRILEECGANAFMDLSTGDDIDAMRKQSLTISNIAAGCVPVYQASVEAIEKHGSMVGMTEDELFDTVEKQCQEGMDFMAIHSALNWSVLNALKKSGRVTDVVSRGGSFLTAWMFHNKKENPLYEHFDRLLEILKATDTVLSIGDAIRPGANADSLDSAQVQGLIVAGELTKRALEAGVQVMIEGPGHVPLNQIATTMQLQKQLCYGVPYYILGFLATDVAPGYDNITGAIGGAFAGMHGADFLCYLTPAEHLGLPNEDDVRMGVRTTKIAADAANVLKRGGNAWNRSLAMSKARVARDEKVQVANALDPEYLESKLKAEPESHGCAACGKSKCPADVAAEFFGIA</sequence>
<name>BZAB_EUBLI</name>
<feature type="chain" id="PRO_0000441746" description="5-hydroxybenzimidazole synthase BzaB">
    <location>
        <begin position="1"/>
        <end position="427"/>
    </location>
</feature>
<accession>A0A0K1TQ05</accession>